<sequence>MSLISAVPLASSCVSKSLISSVREHTALRRAIATLQMSRRGKSVAASIRMSSATAGSDDGVKRRIGDYHSNLWDDNFIQSLSSPYGASSYGEHADRLIGEVKEIFNSFSIADGELISPVNDLLQQLWMVDNVERLGIDRHFQTEIKVALDYVYRYWSEEGIGCGRDSAFTDLNTTALAFRIFRLHGYTVSSDVFEHFKDQKGQFAASANDTELQTRSVFNLFRASLIAFPEEKVLEEAEKFAAAYLKAALQTLPVSGLSREIQYVFDYRWHSNLPRLEARSYIDILADNTISGTPDANTKKLLELAKLEFNIFHSVQQKELQCLWRWWKEWGCPELTFIRHRYVEFYTLVSGIDMVPEHATFRLSCVKTCHLITILDDMYDTFGTIDELRLFTAAVKRWDPSATECLPEYMKGVYMVLYETVNEMAKEAQKSQRRDTLGYVRQALEDYIGSYLKEAQWIATGYVPTFQEYFENGKLSSGHRIATLQPILTLSIPFPHHILQEIDFPSKFNDYAASILRLRGDTRCYKADSARGEEASCISCYMKDNPGSTQEDALNHINGMIEDMIKKLNWEFLRPDNNAPISSKKHAFNISRGLHHFYNYRDGYSVASKETKDLVIKTVLEPVLM</sequence>
<organism>
    <name type="scientific">Pinus contorta</name>
    <name type="common">Shore pine</name>
    <name type="synonym">Lodgepole pine</name>
    <dbReference type="NCBI Taxonomy" id="3339"/>
    <lineage>
        <taxon>Eukaryota</taxon>
        <taxon>Viridiplantae</taxon>
        <taxon>Streptophyta</taxon>
        <taxon>Embryophyta</taxon>
        <taxon>Tracheophyta</taxon>
        <taxon>Spermatophyta</taxon>
        <taxon>Pinopsida</taxon>
        <taxon>Pinidae</taxon>
        <taxon>Conifers I</taxon>
        <taxon>Pinales</taxon>
        <taxon>Pinaceae</taxon>
        <taxon>Pinus</taxon>
        <taxon>Pinus subgen. Pinus</taxon>
    </lineage>
</organism>
<dbReference type="EC" id="4.2.3.107" evidence="4"/>
<dbReference type="EC" id="4.2.3.113" evidence="4"/>
<dbReference type="EMBL" id="JQ240307">
    <property type="protein sequence ID" value="AFU73859.1"/>
    <property type="molecule type" value="mRNA"/>
</dbReference>
<dbReference type="SMR" id="R9QMW8"/>
<dbReference type="UniPathway" id="UPA00213"/>
<dbReference type="UniPathway" id="UPA00924"/>
<dbReference type="GO" id="GO:0009507">
    <property type="term" value="C:chloroplast"/>
    <property type="evidence" value="ECO:0007669"/>
    <property type="project" value="UniProtKB-SubCell"/>
</dbReference>
<dbReference type="GO" id="GO:0000287">
    <property type="term" value="F:magnesium ion binding"/>
    <property type="evidence" value="ECO:0007669"/>
    <property type="project" value="InterPro"/>
</dbReference>
<dbReference type="GO" id="GO:0010333">
    <property type="term" value="F:terpene synthase activity"/>
    <property type="evidence" value="ECO:0000314"/>
    <property type="project" value="UniProtKB"/>
</dbReference>
<dbReference type="GO" id="GO:0016102">
    <property type="term" value="P:diterpenoid biosynthetic process"/>
    <property type="evidence" value="ECO:0007669"/>
    <property type="project" value="InterPro"/>
</dbReference>
<dbReference type="GO" id="GO:0010597">
    <property type="term" value="P:green leaf volatile biosynthetic process"/>
    <property type="evidence" value="ECO:0000314"/>
    <property type="project" value="UniProtKB"/>
</dbReference>
<dbReference type="GO" id="GO:0016114">
    <property type="term" value="P:terpenoid biosynthetic process"/>
    <property type="evidence" value="ECO:0000314"/>
    <property type="project" value="UniProtKB"/>
</dbReference>
<dbReference type="CDD" id="cd00684">
    <property type="entry name" value="Terpene_cyclase_plant_C1"/>
    <property type="match status" value="1"/>
</dbReference>
<dbReference type="FunFam" id="1.50.10.130:FF:000004">
    <property type="entry name" value="Carene synthase, chloroplastic"/>
    <property type="match status" value="1"/>
</dbReference>
<dbReference type="FunFam" id="1.10.600.10:FF:000005">
    <property type="entry name" value="Ent-kaur-16-ene synthase, chloroplastic"/>
    <property type="match status" value="1"/>
</dbReference>
<dbReference type="Gene3D" id="1.10.600.10">
    <property type="entry name" value="Farnesyl Diphosphate Synthase"/>
    <property type="match status" value="1"/>
</dbReference>
<dbReference type="Gene3D" id="1.50.10.130">
    <property type="entry name" value="Terpene synthase, N-terminal domain"/>
    <property type="match status" value="1"/>
</dbReference>
<dbReference type="InterPro" id="IPR008949">
    <property type="entry name" value="Isoprenoid_synthase_dom_sf"/>
</dbReference>
<dbReference type="InterPro" id="IPR034741">
    <property type="entry name" value="Terpene_cyclase-like_1_C"/>
</dbReference>
<dbReference type="InterPro" id="IPR044814">
    <property type="entry name" value="Terpene_cyclase_plant_C1"/>
</dbReference>
<dbReference type="InterPro" id="IPR001906">
    <property type="entry name" value="Terpene_synth_N"/>
</dbReference>
<dbReference type="InterPro" id="IPR036965">
    <property type="entry name" value="Terpene_synth_N_sf"/>
</dbReference>
<dbReference type="InterPro" id="IPR050148">
    <property type="entry name" value="Terpene_synthase-like"/>
</dbReference>
<dbReference type="InterPro" id="IPR005630">
    <property type="entry name" value="Terpene_synthase_metal-bd"/>
</dbReference>
<dbReference type="InterPro" id="IPR008930">
    <property type="entry name" value="Terpenoid_cyclase/PrenylTrfase"/>
</dbReference>
<dbReference type="PANTHER" id="PTHR31225">
    <property type="entry name" value="OS04G0344100 PROTEIN-RELATED"/>
    <property type="match status" value="1"/>
</dbReference>
<dbReference type="Pfam" id="PF01397">
    <property type="entry name" value="Terpene_synth"/>
    <property type="match status" value="1"/>
</dbReference>
<dbReference type="Pfam" id="PF03936">
    <property type="entry name" value="Terpene_synth_C"/>
    <property type="match status" value="1"/>
</dbReference>
<dbReference type="SFLD" id="SFLDS00005">
    <property type="entry name" value="Isoprenoid_Synthase_Type_I"/>
    <property type="match status" value="1"/>
</dbReference>
<dbReference type="SFLD" id="SFLDG01019">
    <property type="entry name" value="Terpene_Cyclase_Like_1_C_Termi"/>
    <property type="match status" value="1"/>
</dbReference>
<dbReference type="SFLD" id="SFLDG01014">
    <property type="entry name" value="Terpene_Cyclase_Like_1_N-term"/>
    <property type="match status" value="1"/>
</dbReference>
<dbReference type="SUPFAM" id="SSF48239">
    <property type="entry name" value="Terpenoid cyclases/Protein prenyltransferases"/>
    <property type="match status" value="1"/>
</dbReference>
<dbReference type="SUPFAM" id="SSF48576">
    <property type="entry name" value="Terpenoid synthases"/>
    <property type="match status" value="1"/>
</dbReference>
<feature type="transit peptide" description="Chloroplast" evidence="3">
    <location>
        <begin position="1"/>
        <end position="45"/>
    </location>
</feature>
<feature type="chain" id="PRO_0000455013" description="(+)-3-carene synthase 1, chloroplastic">
    <location>
        <begin position="46"/>
        <end position="626"/>
    </location>
</feature>
<feature type="short sequence motif" description="DDXXD motif" evidence="6">
    <location>
        <begin position="377"/>
        <end position="381"/>
    </location>
</feature>
<feature type="binding site" evidence="2">
    <location>
        <position position="377"/>
    </location>
    <ligand>
        <name>Mg(2+)</name>
        <dbReference type="ChEBI" id="CHEBI:18420"/>
        <label>1</label>
    </ligand>
</feature>
<feature type="binding site" evidence="2">
    <location>
        <position position="377"/>
    </location>
    <ligand>
        <name>Mg(2+)</name>
        <dbReference type="ChEBI" id="CHEBI:18420"/>
        <label>2</label>
    </ligand>
</feature>
<feature type="binding site" evidence="2">
    <location>
        <position position="381"/>
    </location>
    <ligand>
        <name>Mg(2+)</name>
        <dbReference type="ChEBI" id="CHEBI:18420"/>
        <label>1</label>
    </ligand>
</feature>
<feature type="binding site" evidence="2">
    <location>
        <position position="381"/>
    </location>
    <ligand>
        <name>Mg(2+)</name>
        <dbReference type="ChEBI" id="CHEBI:18420"/>
        <label>2</label>
    </ligand>
</feature>
<feature type="binding site" evidence="2">
    <location>
        <position position="529"/>
    </location>
    <ligand>
        <name>Mg(2+)</name>
        <dbReference type="ChEBI" id="CHEBI:18420"/>
        <label>3</label>
    </ligand>
</feature>
<comment type="function">
    <text evidence="4">Monoterpene synthase (TPS) involved in the biosynthesis of monoterpene natural products included in conifer oleoresin secretions and volatile emissions; these compounds contribute to biotic and abiotic stress defense against herbivores and pathogens (PubMed:23679205). Catalyzes the conversion of (2E)-geranyl diphosphate (GPP) to (+)-car-3-ene and, to a lower extent, to terpinolene (PubMed:23679205).</text>
</comment>
<comment type="catalytic activity">
    <reaction evidence="4">
        <text>(2E)-geranyl diphosphate = (+)-car-3-ene + diphosphate</text>
        <dbReference type="Rhea" id="RHEA:32539"/>
        <dbReference type="ChEBI" id="CHEBI:7"/>
        <dbReference type="ChEBI" id="CHEBI:33019"/>
        <dbReference type="ChEBI" id="CHEBI:58057"/>
        <dbReference type="EC" id="4.2.3.107"/>
    </reaction>
    <physiologicalReaction direction="left-to-right" evidence="4">
        <dbReference type="Rhea" id="RHEA:32540"/>
    </physiologicalReaction>
</comment>
<comment type="catalytic activity">
    <reaction evidence="4">
        <text>(2E)-geranyl diphosphate = terpinolene + diphosphate</text>
        <dbReference type="Rhea" id="RHEA:25500"/>
        <dbReference type="ChEBI" id="CHEBI:9457"/>
        <dbReference type="ChEBI" id="CHEBI:33019"/>
        <dbReference type="ChEBI" id="CHEBI:58057"/>
        <dbReference type="EC" id="4.2.3.113"/>
    </reaction>
    <physiologicalReaction direction="left-to-right" evidence="4">
        <dbReference type="Rhea" id="RHEA:25501"/>
    </physiologicalReaction>
</comment>
<comment type="cofactor">
    <cofactor evidence="1">
        <name>Mg(2+)</name>
        <dbReference type="ChEBI" id="CHEBI:18420"/>
    </cofactor>
    <cofactor evidence="1">
        <name>Mn(2+)</name>
        <dbReference type="ChEBI" id="CHEBI:29035"/>
    </cofactor>
    <text evidence="1">Binds 3 Mg(2+) or Mn(2+) ions per subunit.</text>
</comment>
<comment type="pathway">
    <text evidence="4">Terpene metabolism; oleoresin biosynthesis.</text>
</comment>
<comment type="pathway">
    <text evidence="4">Secondary metabolite biosynthesis; terpenoid biosynthesis.</text>
</comment>
<comment type="subcellular location">
    <subcellularLocation>
        <location evidence="3">Plastid</location>
        <location evidence="3">Chloroplast</location>
    </subcellularLocation>
</comment>
<comment type="domain">
    <text evidence="6">The Asp-Asp-Xaa-Xaa-Asp/Glu (DDXXD/E) motif is important for the catalytic activity, presumably through binding to Mg(2+).</text>
</comment>
<comment type="similarity">
    <text evidence="6">Belongs to the terpene synthase family. Tpsd subfamily.</text>
</comment>
<proteinExistence type="evidence at protein level"/>
<gene>
    <name evidence="5" type="primary">TPS-(+)3car1</name>
</gene>
<protein>
    <recommendedName>
        <fullName evidence="5">(+)-3-carene synthase 1, chloroplastic</fullName>
        <ecNumber evidence="4">4.2.3.107</ecNumber>
    </recommendedName>
    <alternativeName>
        <fullName evidence="5">Terpene synthase (+)3car1</fullName>
        <shortName evidence="5">PcTPS-(+)3car1</shortName>
    </alternativeName>
    <alternativeName>
        <fullName evidence="5">Terpinolene synthase (+)3car1, chloroplastic</fullName>
        <ecNumber evidence="4">4.2.3.113</ecNumber>
    </alternativeName>
</protein>
<evidence type="ECO:0000250" key="1">
    <source>
        <dbReference type="UniProtKB" id="A0A1C9J6A7"/>
    </source>
</evidence>
<evidence type="ECO:0000250" key="2">
    <source>
        <dbReference type="UniProtKB" id="Q40577"/>
    </source>
</evidence>
<evidence type="ECO:0000255" key="3"/>
<evidence type="ECO:0000269" key="4">
    <source>
    </source>
</evidence>
<evidence type="ECO:0000303" key="5">
    <source>
    </source>
</evidence>
<evidence type="ECO:0000305" key="6"/>
<accession>R9QMW8</accession>
<reference key="1">
    <citation type="journal article" date="2013" name="BMC Plant Biol.">
        <title>Transcriptome resources and functional characterization of monoterpene synthases for two host species of the mountain pine beetle, lodgepole pine (Pinus contorta) and jack pine (Pinus banksiana).</title>
        <authorList>
            <person name="Hall D.E."/>
            <person name="Yuen M.M.S."/>
            <person name="Jancsik S."/>
            <person name="Quesada A.L."/>
            <person name="Dullat H.K."/>
            <person name="Li M."/>
            <person name="Henderson H."/>
            <person name="Arango-Velez A."/>
            <person name="Liao N.Y."/>
            <person name="Docking R.T."/>
            <person name="Chan S.K."/>
            <person name="Cooke J.E.K."/>
            <person name="Breuil C."/>
            <person name="Jones S.J.M."/>
            <person name="Keeling C.I."/>
            <person name="Bohlmann J."/>
        </authorList>
    </citation>
    <scope>NUCLEOTIDE SEQUENCE [MRNA]</scope>
    <scope>FUNCTION</scope>
    <scope>CATALYTIC ACTIVITY</scope>
    <scope>PATHWAY</scope>
</reference>
<name>3CAR1_PINCO</name>
<keyword id="KW-0150">Chloroplast</keyword>
<keyword id="KW-0456">Lyase</keyword>
<keyword id="KW-0460">Magnesium</keyword>
<keyword id="KW-0479">Metal-binding</keyword>
<keyword id="KW-0934">Plastid</keyword>
<keyword id="KW-0809">Transit peptide</keyword>